<comment type="function">
    <text evidence="3">Plays a role in the nuclear pore complex (NPC) assembly and/or maintenance. May anchor nucleoporins, but not NUP153 and TPR, to the NPC. During renal development, regulates podocyte migration and proliferation through SMAD4 signaling.</text>
</comment>
<comment type="subunit">
    <text evidence="3">Part of the nuclear pore complex (NPC). Component of the p62 complex, a complex composed of NUP62 and NUP54. Forms a complex with NUP35, NUP155, NUP205 and lamin B; the interaction with NUP35 is direct. Does not interact with TPR. Interacts with SMAD4 and IPO7; translocates SMAD4 to the nucleus through the NPC upon BMP7 stimulation resulting in activation of SMAD4 signaling.</text>
</comment>
<comment type="subcellular location">
    <subcellularLocation>
        <location evidence="2">Nucleus membrane</location>
        <topology evidence="2">Peripheral membrane protein</topology>
    </subcellularLocation>
    <subcellularLocation>
        <location evidence="3">Nucleus</location>
        <location evidence="3">Nuclear pore complex</location>
    </subcellularLocation>
    <subcellularLocation>
        <location evidence="3">Nucleus envelope</location>
    </subcellularLocation>
    <text evidence="1">Localizes at the nuclear basket and at or near the nuclear entry to the gated channel of the pore.</text>
</comment>
<comment type="alternative products">
    <event type="alternative splicing"/>
    <isoform>
        <id>Q5R822-1</id>
        <name>1</name>
        <sequence type="displayed"/>
    </isoform>
    <isoform>
        <id>Q5R822-2</id>
        <name>2</name>
        <sequence type="described" ref="VSP_036026"/>
    </isoform>
</comment>
<comment type="similarity">
    <text evidence="5">Belongs to the nucleoporin interacting component (NIC) family.</text>
</comment>
<gene>
    <name type="primary">NUP93</name>
</gene>
<reference key="1">
    <citation type="submission" date="2004-11" db="EMBL/GenBank/DDBJ databases">
        <authorList>
            <consortium name="The German cDNA consortium"/>
        </authorList>
    </citation>
    <scope>NUCLEOTIDE SEQUENCE [LARGE SCALE MRNA] (ISOFORMS 1 AND 2)</scope>
    <source>
        <tissue>Heart</tissue>
        <tissue>Kidney</tissue>
    </source>
</reference>
<proteinExistence type="evidence at transcript level"/>
<sequence>MDTEGFGELLQQAEQLAAETEGISELPHVERNLQEIQQAGERLCSRTLTRTSQETADVKASVLLGSRGLDISHISQRLESLSAATTFEPLEPVKDTDIQGFLKNEKDNALLSAIEESRKRTFGMAEEYHRESMLVEWEQVKQRILHTLLASGEDALDFTQESEPSYISDVGPPGRSSLDNIEMAYARQIYIYNEKIVNGHLQPNLVDLCASVAELDDKSISDMWTMVKQMTDVLLTPATDALKNRSSVEVRMEFVRQALAYLEQSYKNYTLVTVFGNLHQAQLGGVPGTYQLVRSFLNIKLPAPLPGLQDGEVEGHPVWALIYYCMRCGDLLAASQVVNRAQHQLGEFKTWFQEYMNSKDRRLSPATENKLRLHYRRALRNNTDPYKRAVYCIIGRCDVTDNQSEVADKTEDYLWLKLNQVCFDDDGTSSPQDRLTLSQFQKQLLEDYGESHFTVNQQPFLYFQVLFLTAQFEAAIAFLFRMERLRCHAVHVALVLFELKLLLKSSGQSAQLLSHEPGDPPCMRRLNFVRLLMLYTRKFESTDPREALQYFYFLRDEKDSQGENMFLRCVSELVIESREFDMILGKLENDGSRKPGVIDKFTSDTKPIINKVASVAENKGLFEEAAKLYDLAKNADKVLELMNKLLSPVVPQISAPQSNKERLKNMALSIAERYRAQGISANKFVDSTFYLLLDLITFFDEYHSGHIDRAFDIIERLKLVPLNQESVEERVAAFRNFSDEIRHNLSEVLLATMNILFTQFKRLKGTSPSSSSRPQRVIEDRDSQLRSQACTLITFAGMIPYRTSGDTNARLVQMEVLMN</sequence>
<accession>Q5R822</accession>
<accession>Q5R8Y2</accession>
<dbReference type="EMBL" id="CR859615">
    <property type="protein sequence ID" value="CAH91778.1"/>
    <property type="molecule type" value="mRNA"/>
</dbReference>
<dbReference type="EMBL" id="CR859933">
    <property type="protein sequence ID" value="CAH92088.1"/>
    <property type="molecule type" value="mRNA"/>
</dbReference>
<dbReference type="RefSeq" id="NP_001126031.1">
    <property type="nucleotide sequence ID" value="NM_001132559.2"/>
</dbReference>
<dbReference type="RefSeq" id="NP_001128848.1">
    <property type="nucleotide sequence ID" value="NM_001135376.1"/>
</dbReference>
<dbReference type="SMR" id="Q5R822"/>
<dbReference type="FunCoup" id="Q5R822">
    <property type="interactions" value="4594"/>
</dbReference>
<dbReference type="STRING" id="9601.ENSPPYP00000008332"/>
<dbReference type="GeneID" id="100172979"/>
<dbReference type="KEGG" id="pon:100172979"/>
<dbReference type="CTD" id="9688"/>
<dbReference type="eggNOG" id="KOG2168">
    <property type="taxonomic scope" value="Eukaryota"/>
</dbReference>
<dbReference type="InParanoid" id="Q5R822"/>
<dbReference type="OrthoDB" id="1918363at2759"/>
<dbReference type="Proteomes" id="UP000001595">
    <property type="component" value="Unplaced"/>
</dbReference>
<dbReference type="GO" id="GO:0005635">
    <property type="term" value="C:nuclear envelope"/>
    <property type="evidence" value="ECO:0000250"/>
    <property type="project" value="UniProtKB"/>
</dbReference>
<dbReference type="GO" id="GO:0031965">
    <property type="term" value="C:nuclear membrane"/>
    <property type="evidence" value="ECO:0000250"/>
    <property type="project" value="UniProtKB"/>
</dbReference>
<dbReference type="GO" id="GO:0034399">
    <property type="term" value="C:nuclear periphery"/>
    <property type="evidence" value="ECO:0000250"/>
    <property type="project" value="UniProtKB"/>
</dbReference>
<dbReference type="GO" id="GO:0005643">
    <property type="term" value="C:nuclear pore"/>
    <property type="evidence" value="ECO:0000250"/>
    <property type="project" value="UniProtKB"/>
</dbReference>
<dbReference type="GO" id="GO:0017056">
    <property type="term" value="F:structural constituent of nuclear pore"/>
    <property type="evidence" value="ECO:0000250"/>
    <property type="project" value="UniProtKB"/>
</dbReference>
<dbReference type="GO" id="GO:0006998">
    <property type="term" value="P:nuclear envelope organization"/>
    <property type="evidence" value="ECO:0000250"/>
    <property type="project" value="UniProtKB"/>
</dbReference>
<dbReference type="GO" id="GO:0051292">
    <property type="term" value="P:nuclear pore complex assembly"/>
    <property type="evidence" value="ECO:0000250"/>
    <property type="project" value="UniProtKB"/>
</dbReference>
<dbReference type="GO" id="GO:0016973">
    <property type="term" value="P:poly(A)+ mRNA export from nucleus"/>
    <property type="evidence" value="ECO:0007669"/>
    <property type="project" value="TreeGrafter"/>
</dbReference>
<dbReference type="GO" id="GO:0060391">
    <property type="term" value="P:positive regulation of SMAD protein signal transduction"/>
    <property type="evidence" value="ECO:0000250"/>
    <property type="project" value="UniProtKB"/>
</dbReference>
<dbReference type="GO" id="GO:0006606">
    <property type="term" value="P:protein import into nucleus"/>
    <property type="evidence" value="ECO:0007669"/>
    <property type="project" value="TreeGrafter"/>
</dbReference>
<dbReference type="InterPro" id="IPR007231">
    <property type="entry name" value="Nucleoporin_int_Nup93/Nic96"/>
</dbReference>
<dbReference type="PANTHER" id="PTHR11225:SF4">
    <property type="entry name" value="NUCLEAR PORE COMPLEX PROTEIN NUP93"/>
    <property type="match status" value="1"/>
</dbReference>
<dbReference type="PANTHER" id="PTHR11225">
    <property type="entry name" value="NUCLEAR PORE COMPLEX PROTEIN NUP93 NUCLEOPORIN NUP93 DEAD EYE PROTEIN"/>
    <property type="match status" value="1"/>
</dbReference>
<dbReference type="Pfam" id="PF04097">
    <property type="entry name" value="Nic96"/>
    <property type="match status" value="1"/>
</dbReference>
<keyword id="KW-0025">Alternative splicing</keyword>
<keyword id="KW-0472">Membrane</keyword>
<keyword id="KW-0509">mRNA transport</keyword>
<keyword id="KW-0906">Nuclear pore complex</keyword>
<keyword id="KW-0539">Nucleus</keyword>
<keyword id="KW-0597">Phosphoprotein</keyword>
<keyword id="KW-0653">Protein transport</keyword>
<keyword id="KW-1185">Reference proteome</keyword>
<keyword id="KW-0811">Translocation</keyword>
<keyword id="KW-0813">Transport</keyword>
<name>NUP93_PONAB</name>
<evidence type="ECO:0000250" key="1"/>
<evidence type="ECO:0000250" key="2">
    <source>
        <dbReference type="UniProtKB" id="Q66HC5"/>
    </source>
</evidence>
<evidence type="ECO:0000250" key="3">
    <source>
        <dbReference type="UniProtKB" id="Q8N1F7"/>
    </source>
</evidence>
<evidence type="ECO:0000303" key="4">
    <source ref="1"/>
</evidence>
<evidence type="ECO:0000305" key="5"/>
<feature type="chain" id="PRO_0000356295" description="Nuclear pore complex protein Nup93">
    <location>
        <begin position="1"/>
        <end position="819"/>
    </location>
</feature>
<feature type="modified residue" description="Phosphothreonine" evidence="3">
    <location>
        <position position="49"/>
    </location>
</feature>
<feature type="modified residue" description="Phosphoserine" evidence="3">
    <location>
        <position position="52"/>
    </location>
</feature>
<feature type="modified residue" description="Phosphoserine" evidence="3">
    <location>
        <position position="66"/>
    </location>
</feature>
<feature type="modified residue" description="Phosphoserine" evidence="3">
    <location>
        <position position="72"/>
    </location>
</feature>
<feature type="modified residue" description="Phosphoserine" evidence="3">
    <location>
        <position position="75"/>
    </location>
</feature>
<feature type="modified residue" description="Phosphoserine" evidence="3">
    <location>
        <position position="80"/>
    </location>
</feature>
<feature type="modified residue" description="Phosphoserine" evidence="3">
    <location>
        <position position="430"/>
    </location>
</feature>
<feature type="modified residue" description="Phosphoserine" evidence="3">
    <location>
        <position position="767"/>
    </location>
</feature>
<feature type="splice variant" id="VSP_036026" description="In isoform 2." evidence="4">
    <original>QLRSQACTLITFAGMIPYRTSGDTNARLVQMEVLMN</original>
    <variation>GLALSPRLECNDTISARCNLHLLGSSHPPTSPSQVAGTTATPKSSPHPDYLCWNDTIPNVWGHQCEAGADGGPHELSAMLWGCLSRHTVSTSGTWAH</variation>
    <location>
        <begin position="784"/>
        <end position="819"/>
    </location>
</feature>
<feature type="sequence conflict" description="In Ref. 1; CAH91778." evidence="5" ref="1">
    <original>G</original>
    <variation>R</variation>
    <location>
        <position position="199"/>
    </location>
</feature>
<feature type="sequence conflict" description="In Ref. 1; CAH92088." evidence="5" ref="1">
    <original>S</original>
    <variation>C</variation>
    <location>
        <position position="246"/>
    </location>
</feature>
<feature type="sequence conflict" description="In Ref. 1; CAH92088." evidence="5" ref="1">
    <original>L</original>
    <variation>P</variation>
    <location>
        <position position="416"/>
    </location>
</feature>
<organism>
    <name type="scientific">Pongo abelii</name>
    <name type="common">Sumatran orangutan</name>
    <name type="synonym">Pongo pygmaeus abelii</name>
    <dbReference type="NCBI Taxonomy" id="9601"/>
    <lineage>
        <taxon>Eukaryota</taxon>
        <taxon>Metazoa</taxon>
        <taxon>Chordata</taxon>
        <taxon>Craniata</taxon>
        <taxon>Vertebrata</taxon>
        <taxon>Euteleostomi</taxon>
        <taxon>Mammalia</taxon>
        <taxon>Eutheria</taxon>
        <taxon>Euarchontoglires</taxon>
        <taxon>Primates</taxon>
        <taxon>Haplorrhini</taxon>
        <taxon>Catarrhini</taxon>
        <taxon>Hominidae</taxon>
        <taxon>Pongo</taxon>
    </lineage>
</organism>
<protein>
    <recommendedName>
        <fullName>Nuclear pore complex protein Nup93</fullName>
    </recommendedName>
    <alternativeName>
        <fullName>93 kDa nucleoporin</fullName>
    </alternativeName>
    <alternativeName>
        <fullName>Nucleoporin Nup93</fullName>
    </alternativeName>
</protein>